<feature type="chain" id="PRO_1000054706" description="Large ribosomal subunit protein uL16">
    <location>
        <begin position="1"/>
        <end position="136"/>
    </location>
</feature>
<evidence type="ECO:0000255" key="1">
    <source>
        <dbReference type="HAMAP-Rule" id="MF_01342"/>
    </source>
</evidence>
<evidence type="ECO:0000305" key="2"/>
<reference key="1">
    <citation type="submission" date="2006-08" db="EMBL/GenBank/DDBJ databases">
        <title>Complete sequence of Shewanella sp. MR-4.</title>
        <authorList>
            <consortium name="US DOE Joint Genome Institute"/>
            <person name="Copeland A."/>
            <person name="Lucas S."/>
            <person name="Lapidus A."/>
            <person name="Barry K."/>
            <person name="Detter J.C."/>
            <person name="Glavina del Rio T."/>
            <person name="Hammon N."/>
            <person name="Israni S."/>
            <person name="Dalin E."/>
            <person name="Tice H."/>
            <person name="Pitluck S."/>
            <person name="Kiss H."/>
            <person name="Brettin T."/>
            <person name="Bruce D."/>
            <person name="Han C."/>
            <person name="Tapia R."/>
            <person name="Gilna P."/>
            <person name="Schmutz J."/>
            <person name="Larimer F."/>
            <person name="Land M."/>
            <person name="Hauser L."/>
            <person name="Kyrpides N."/>
            <person name="Mikhailova N."/>
            <person name="Nealson K."/>
            <person name="Konstantinidis K."/>
            <person name="Klappenbach J."/>
            <person name="Tiedje J."/>
            <person name="Richardson P."/>
        </authorList>
    </citation>
    <scope>NUCLEOTIDE SEQUENCE [LARGE SCALE GENOMIC DNA]</scope>
    <source>
        <strain>MR-4</strain>
    </source>
</reference>
<sequence>MLQPKRMKFRKMFKGRNRGLANGTEVSFGTFGLKAVGRGRLTARQIESARRAMTRHIKRQGQIWIRVFPDKPITSKPLEVRMGKGKGNVEYWVCQIQPGKVLYEMNGVSEVIAREAFALAAAKLPIKTTFVTKTVM</sequence>
<comment type="function">
    <text evidence="1">Binds 23S rRNA and is also seen to make contacts with the A and possibly P site tRNAs.</text>
</comment>
<comment type="subunit">
    <text evidence="1">Part of the 50S ribosomal subunit.</text>
</comment>
<comment type="similarity">
    <text evidence="1">Belongs to the universal ribosomal protein uL16 family.</text>
</comment>
<dbReference type="EMBL" id="CP000446">
    <property type="protein sequence ID" value="ABI37287.1"/>
    <property type="molecule type" value="Genomic_DNA"/>
</dbReference>
<dbReference type="RefSeq" id="WP_006083593.1">
    <property type="nucleotide sequence ID" value="NC_008321.1"/>
</dbReference>
<dbReference type="SMR" id="Q0HNT0"/>
<dbReference type="GeneID" id="94726193"/>
<dbReference type="KEGG" id="she:Shewmr4_0206"/>
<dbReference type="HOGENOM" id="CLU_078858_2_1_6"/>
<dbReference type="GO" id="GO:0022625">
    <property type="term" value="C:cytosolic large ribosomal subunit"/>
    <property type="evidence" value="ECO:0007669"/>
    <property type="project" value="TreeGrafter"/>
</dbReference>
<dbReference type="GO" id="GO:0019843">
    <property type="term" value="F:rRNA binding"/>
    <property type="evidence" value="ECO:0007669"/>
    <property type="project" value="UniProtKB-UniRule"/>
</dbReference>
<dbReference type="GO" id="GO:0003735">
    <property type="term" value="F:structural constituent of ribosome"/>
    <property type="evidence" value="ECO:0007669"/>
    <property type="project" value="InterPro"/>
</dbReference>
<dbReference type="GO" id="GO:0000049">
    <property type="term" value="F:tRNA binding"/>
    <property type="evidence" value="ECO:0007669"/>
    <property type="project" value="UniProtKB-KW"/>
</dbReference>
<dbReference type="GO" id="GO:0006412">
    <property type="term" value="P:translation"/>
    <property type="evidence" value="ECO:0007669"/>
    <property type="project" value="UniProtKB-UniRule"/>
</dbReference>
<dbReference type="CDD" id="cd01433">
    <property type="entry name" value="Ribosomal_L16_L10e"/>
    <property type="match status" value="1"/>
</dbReference>
<dbReference type="FunFam" id="3.90.1170.10:FF:000001">
    <property type="entry name" value="50S ribosomal protein L16"/>
    <property type="match status" value="1"/>
</dbReference>
<dbReference type="Gene3D" id="3.90.1170.10">
    <property type="entry name" value="Ribosomal protein L10e/L16"/>
    <property type="match status" value="1"/>
</dbReference>
<dbReference type="HAMAP" id="MF_01342">
    <property type="entry name" value="Ribosomal_uL16"/>
    <property type="match status" value="1"/>
</dbReference>
<dbReference type="InterPro" id="IPR047873">
    <property type="entry name" value="Ribosomal_uL16"/>
</dbReference>
<dbReference type="InterPro" id="IPR000114">
    <property type="entry name" value="Ribosomal_uL16_bact-type"/>
</dbReference>
<dbReference type="InterPro" id="IPR020798">
    <property type="entry name" value="Ribosomal_uL16_CS"/>
</dbReference>
<dbReference type="InterPro" id="IPR016180">
    <property type="entry name" value="Ribosomal_uL16_dom"/>
</dbReference>
<dbReference type="InterPro" id="IPR036920">
    <property type="entry name" value="Ribosomal_uL16_sf"/>
</dbReference>
<dbReference type="NCBIfam" id="TIGR01164">
    <property type="entry name" value="rplP_bact"/>
    <property type="match status" value="1"/>
</dbReference>
<dbReference type="PANTHER" id="PTHR12220">
    <property type="entry name" value="50S/60S RIBOSOMAL PROTEIN L16"/>
    <property type="match status" value="1"/>
</dbReference>
<dbReference type="PANTHER" id="PTHR12220:SF13">
    <property type="entry name" value="LARGE RIBOSOMAL SUBUNIT PROTEIN UL16M"/>
    <property type="match status" value="1"/>
</dbReference>
<dbReference type="Pfam" id="PF00252">
    <property type="entry name" value="Ribosomal_L16"/>
    <property type="match status" value="1"/>
</dbReference>
<dbReference type="PRINTS" id="PR00060">
    <property type="entry name" value="RIBOSOMALL16"/>
</dbReference>
<dbReference type="SUPFAM" id="SSF54686">
    <property type="entry name" value="Ribosomal protein L16p/L10e"/>
    <property type="match status" value="1"/>
</dbReference>
<dbReference type="PROSITE" id="PS00586">
    <property type="entry name" value="RIBOSOMAL_L16_1"/>
    <property type="match status" value="1"/>
</dbReference>
<dbReference type="PROSITE" id="PS00701">
    <property type="entry name" value="RIBOSOMAL_L16_2"/>
    <property type="match status" value="1"/>
</dbReference>
<gene>
    <name evidence="1" type="primary">rplP</name>
    <name type="ordered locus">Shewmr4_0206</name>
</gene>
<protein>
    <recommendedName>
        <fullName evidence="1">Large ribosomal subunit protein uL16</fullName>
    </recommendedName>
    <alternativeName>
        <fullName evidence="2">50S ribosomal protein L16</fullName>
    </alternativeName>
</protein>
<name>RL16_SHESM</name>
<organism>
    <name type="scientific">Shewanella sp. (strain MR-4)</name>
    <dbReference type="NCBI Taxonomy" id="60480"/>
    <lineage>
        <taxon>Bacteria</taxon>
        <taxon>Pseudomonadati</taxon>
        <taxon>Pseudomonadota</taxon>
        <taxon>Gammaproteobacteria</taxon>
        <taxon>Alteromonadales</taxon>
        <taxon>Shewanellaceae</taxon>
        <taxon>Shewanella</taxon>
    </lineage>
</organism>
<keyword id="KW-0687">Ribonucleoprotein</keyword>
<keyword id="KW-0689">Ribosomal protein</keyword>
<keyword id="KW-0694">RNA-binding</keyword>
<keyword id="KW-0699">rRNA-binding</keyword>
<keyword id="KW-0820">tRNA-binding</keyword>
<proteinExistence type="inferred from homology"/>
<accession>Q0HNT0</accession>